<accession>Q2LR71</accession>
<comment type="function">
    <text evidence="1">The UvrABC repair system catalyzes the recognition and processing of DNA lesions. UvrC both incises the 5' and 3' sides of the lesion. The N-terminal half is responsible for the 3' incision and the C-terminal half is responsible for the 5' incision.</text>
</comment>
<comment type="subunit">
    <text evidence="1">Interacts with UvrB in an incision complex.</text>
</comment>
<comment type="subcellular location">
    <subcellularLocation>
        <location evidence="1">Cytoplasm</location>
    </subcellularLocation>
</comment>
<comment type="similarity">
    <text evidence="1">Belongs to the UvrC family.</text>
</comment>
<organism>
    <name type="scientific">Syntrophus aciditrophicus (strain SB)</name>
    <dbReference type="NCBI Taxonomy" id="56780"/>
    <lineage>
        <taxon>Bacteria</taxon>
        <taxon>Pseudomonadati</taxon>
        <taxon>Thermodesulfobacteriota</taxon>
        <taxon>Syntrophia</taxon>
        <taxon>Syntrophales</taxon>
        <taxon>Syntrophaceae</taxon>
        <taxon>Syntrophus</taxon>
    </lineage>
</organism>
<feature type="chain" id="PRO_0000264969" description="UvrABC system protein C">
    <location>
        <begin position="1"/>
        <end position="618"/>
    </location>
</feature>
<feature type="domain" description="GIY-YIG" evidence="1">
    <location>
        <begin position="15"/>
        <end position="93"/>
    </location>
</feature>
<feature type="domain" description="UVR" evidence="1">
    <location>
        <begin position="203"/>
        <end position="238"/>
    </location>
</feature>
<protein>
    <recommendedName>
        <fullName evidence="1">UvrABC system protein C</fullName>
        <shortName evidence="1">Protein UvrC</shortName>
    </recommendedName>
    <alternativeName>
        <fullName evidence="1">Excinuclease ABC subunit C</fullName>
    </alternativeName>
</protein>
<gene>
    <name evidence="1" type="primary">uvrC</name>
    <name type="ordered locus">SYNAS_07050</name>
    <name type="ORF">SYN_01348</name>
</gene>
<name>UVRC_SYNAS</name>
<sequence>MNRQQLEGRIDIAPRTPGVYLMKDAAGKILYVGKAKNLKSRTRAYFSGTDSRAMIPFLVSRIHDIEFILTETEKEALILENNLIKEHHPRYNICFRDDKAYFNIRADLNEPFPRFQLVRRPRKDGAKYFGPYPSSASARETLQFLQSIFPLRTCRDAELKSRTRPCLEYQIKRCLAPCVGRINSEDYLQMVRDGVSFLEGRGNNLLRELRERMKMAAEQMNYEEAAFLRDRIRAIEETLERQRMVSMTFKDQDIFGLYREGHLIQVCILLIRQGKILGSRLLPLLKFEGETADMLSSLLMQYYDQSVDIPQEILIPASIEDRQVIREWLEEKRGKGLSILIPRKGRGLELLHIAEQNAEHGFKMERKSLDDSDESLRLLMERLHLRRFPRKIEAFDISNIGGRLAVAAMVTFQDGRPLKSGYRRFRIRTVHGADDYAMMYEALKRRYQGKENLPDLIVVDGGKGQLAVAFSLLKDLSISGQDVIGLAKERVNGVTVQGGVNKSEDRVYLPHKKEALYLSRWPAVLFLLQRIRDEAHRFAVSYHRSLKTRSDFMSLLDDIPGVGEVRKKALLLSFGDLARIREATVEELTQVEGIGKDLGEKIHAFLHNDQRSVEPSTG</sequence>
<keyword id="KW-0963">Cytoplasm</keyword>
<keyword id="KW-0227">DNA damage</keyword>
<keyword id="KW-0228">DNA excision</keyword>
<keyword id="KW-0234">DNA repair</keyword>
<keyword id="KW-0267">Excision nuclease</keyword>
<keyword id="KW-1185">Reference proteome</keyword>
<keyword id="KW-0742">SOS response</keyword>
<dbReference type="EMBL" id="CP000252">
    <property type="protein sequence ID" value="ABC76584.1"/>
    <property type="molecule type" value="Genomic_DNA"/>
</dbReference>
<dbReference type="RefSeq" id="WP_011416618.1">
    <property type="nucleotide sequence ID" value="NC_007759.1"/>
</dbReference>
<dbReference type="SMR" id="Q2LR71"/>
<dbReference type="FunCoup" id="Q2LR71">
    <property type="interactions" value="223"/>
</dbReference>
<dbReference type="STRING" id="56780.SYN_01348"/>
<dbReference type="KEGG" id="sat:SYN_01348"/>
<dbReference type="eggNOG" id="COG0322">
    <property type="taxonomic scope" value="Bacteria"/>
</dbReference>
<dbReference type="HOGENOM" id="CLU_014841_3_2_7"/>
<dbReference type="InParanoid" id="Q2LR71"/>
<dbReference type="OrthoDB" id="9804933at2"/>
<dbReference type="Proteomes" id="UP000001933">
    <property type="component" value="Chromosome"/>
</dbReference>
<dbReference type="GO" id="GO:0005737">
    <property type="term" value="C:cytoplasm"/>
    <property type="evidence" value="ECO:0007669"/>
    <property type="project" value="UniProtKB-SubCell"/>
</dbReference>
<dbReference type="GO" id="GO:0009380">
    <property type="term" value="C:excinuclease repair complex"/>
    <property type="evidence" value="ECO:0007669"/>
    <property type="project" value="InterPro"/>
</dbReference>
<dbReference type="GO" id="GO:0003677">
    <property type="term" value="F:DNA binding"/>
    <property type="evidence" value="ECO:0007669"/>
    <property type="project" value="UniProtKB-UniRule"/>
</dbReference>
<dbReference type="GO" id="GO:0009381">
    <property type="term" value="F:excinuclease ABC activity"/>
    <property type="evidence" value="ECO:0007669"/>
    <property type="project" value="UniProtKB-UniRule"/>
</dbReference>
<dbReference type="GO" id="GO:0006289">
    <property type="term" value="P:nucleotide-excision repair"/>
    <property type="evidence" value="ECO:0007669"/>
    <property type="project" value="UniProtKB-UniRule"/>
</dbReference>
<dbReference type="GO" id="GO:0009432">
    <property type="term" value="P:SOS response"/>
    <property type="evidence" value="ECO:0007669"/>
    <property type="project" value="UniProtKB-UniRule"/>
</dbReference>
<dbReference type="CDD" id="cd10434">
    <property type="entry name" value="GIY-YIG_UvrC_Cho"/>
    <property type="match status" value="1"/>
</dbReference>
<dbReference type="FunFam" id="3.40.1440.10:FF:000001">
    <property type="entry name" value="UvrABC system protein C"/>
    <property type="match status" value="1"/>
</dbReference>
<dbReference type="Gene3D" id="1.10.150.20">
    <property type="entry name" value="5' to 3' exonuclease, C-terminal subdomain"/>
    <property type="match status" value="1"/>
</dbReference>
<dbReference type="Gene3D" id="3.40.1440.10">
    <property type="entry name" value="GIY-YIG endonuclease"/>
    <property type="match status" value="1"/>
</dbReference>
<dbReference type="Gene3D" id="4.10.860.10">
    <property type="entry name" value="UVR domain"/>
    <property type="match status" value="1"/>
</dbReference>
<dbReference type="Gene3D" id="3.30.420.340">
    <property type="entry name" value="UvrC, RNAse H endonuclease domain"/>
    <property type="match status" value="1"/>
</dbReference>
<dbReference type="HAMAP" id="MF_00203">
    <property type="entry name" value="UvrC"/>
    <property type="match status" value="1"/>
</dbReference>
<dbReference type="InterPro" id="IPR041663">
    <property type="entry name" value="DisA/LigA_HHH"/>
</dbReference>
<dbReference type="InterPro" id="IPR000305">
    <property type="entry name" value="GIY-YIG_endonuc"/>
</dbReference>
<dbReference type="InterPro" id="IPR035901">
    <property type="entry name" value="GIY-YIG_endonuc_sf"/>
</dbReference>
<dbReference type="InterPro" id="IPR047296">
    <property type="entry name" value="GIY-YIG_UvrC_Cho"/>
</dbReference>
<dbReference type="InterPro" id="IPR003583">
    <property type="entry name" value="Hlx-hairpin-Hlx_DNA-bd_motif"/>
</dbReference>
<dbReference type="InterPro" id="IPR010994">
    <property type="entry name" value="RuvA_2-like"/>
</dbReference>
<dbReference type="InterPro" id="IPR001943">
    <property type="entry name" value="UVR_dom"/>
</dbReference>
<dbReference type="InterPro" id="IPR036876">
    <property type="entry name" value="UVR_dom_sf"/>
</dbReference>
<dbReference type="InterPro" id="IPR050066">
    <property type="entry name" value="UvrABC_protein_C"/>
</dbReference>
<dbReference type="InterPro" id="IPR004791">
    <property type="entry name" value="UvrC"/>
</dbReference>
<dbReference type="InterPro" id="IPR001162">
    <property type="entry name" value="UvrC_RNase_H_dom"/>
</dbReference>
<dbReference type="InterPro" id="IPR038476">
    <property type="entry name" value="UvrC_RNase_H_dom_sf"/>
</dbReference>
<dbReference type="NCBIfam" id="NF001824">
    <property type="entry name" value="PRK00558.1-5"/>
    <property type="match status" value="1"/>
</dbReference>
<dbReference type="NCBIfam" id="TIGR00194">
    <property type="entry name" value="uvrC"/>
    <property type="match status" value="1"/>
</dbReference>
<dbReference type="PANTHER" id="PTHR30562:SF1">
    <property type="entry name" value="UVRABC SYSTEM PROTEIN C"/>
    <property type="match status" value="1"/>
</dbReference>
<dbReference type="PANTHER" id="PTHR30562">
    <property type="entry name" value="UVRC/OXIDOREDUCTASE"/>
    <property type="match status" value="1"/>
</dbReference>
<dbReference type="Pfam" id="PF01541">
    <property type="entry name" value="GIY-YIG"/>
    <property type="match status" value="1"/>
</dbReference>
<dbReference type="Pfam" id="PF12826">
    <property type="entry name" value="HHH_2"/>
    <property type="match status" value="1"/>
</dbReference>
<dbReference type="Pfam" id="PF02151">
    <property type="entry name" value="UVR"/>
    <property type="match status" value="1"/>
</dbReference>
<dbReference type="Pfam" id="PF22920">
    <property type="entry name" value="UvrC_RNaseH"/>
    <property type="match status" value="1"/>
</dbReference>
<dbReference type="Pfam" id="PF08459">
    <property type="entry name" value="UvrC_RNaseH_dom"/>
    <property type="match status" value="1"/>
</dbReference>
<dbReference type="SMART" id="SM00465">
    <property type="entry name" value="GIYc"/>
    <property type="match status" value="1"/>
</dbReference>
<dbReference type="SMART" id="SM00278">
    <property type="entry name" value="HhH1"/>
    <property type="match status" value="2"/>
</dbReference>
<dbReference type="SUPFAM" id="SSF46600">
    <property type="entry name" value="C-terminal UvrC-binding domain of UvrB"/>
    <property type="match status" value="1"/>
</dbReference>
<dbReference type="SUPFAM" id="SSF82771">
    <property type="entry name" value="GIY-YIG endonuclease"/>
    <property type="match status" value="1"/>
</dbReference>
<dbReference type="SUPFAM" id="SSF47781">
    <property type="entry name" value="RuvA domain 2-like"/>
    <property type="match status" value="1"/>
</dbReference>
<dbReference type="PROSITE" id="PS50164">
    <property type="entry name" value="GIY_YIG"/>
    <property type="match status" value="1"/>
</dbReference>
<dbReference type="PROSITE" id="PS50151">
    <property type="entry name" value="UVR"/>
    <property type="match status" value="1"/>
</dbReference>
<dbReference type="PROSITE" id="PS50165">
    <property type="entry name" value="UVRC"/>
    <property type="match status" value="1"/>
</dbReference>
<evidence type="ECO:0000255" key="1">
    <source>
        <dbReference type="HAMAP-Rule" id="MF_00203"/>
    </source>
</evidence>
<reference key="1">
    <citation type="journal article" date="2007" name="Proc. Natl. Acad. Sci. U.S.A.">
        <title>The genome of Syntrophus aciditrophicus: life at the thermodynamic limit of microbial growth.</title>
        <authorList>
            <person name="McInerney M.J."/>
            <person name="Rohlin L."/>
            <person name="Mouttaki H."/>
            <person name="Kim U."/>
            <person name="Krupp R.S."/>
            <person name="Rios-Hernandez L."/>
            <person name="Sieber J."/>
            <person name="Struchtemeyer C.G."/>
            <person name="Bhattacharyya A."/>
            <person name="Campbell J.W."/>
            <person name="Gunsalus R.P."/>
        </authorList>
    </citation>
    <scope>NUCLEOTIDE SEQUENCE [LARGE SCALE GENOMIC DNA]</scope>
    <source>
        <strain>SB</strain>
    </source>
</reference>
<proteinExistence type="inferred from homology"/>